<sequence>MDVRQSIHSEHAKTLDTQALRREFLIENIFVADEYTMVYSHIDRIIVGGIMPVSHSVEIGGEVGKQLGVSRLLDRRELGVINIGGAGAIIVDGQRHDIGHRDALYIGKGAKELVFVSNEASRPAKFYYNCAPAHTAYPTKKVSPADVAPVTLGDNLTSNRRTINKYFVPDVLETCQLSMGLTELAPGNLWNTMPCHTHERRMEVYLYFNMEEDSCVFHMMGQPQETRHIVMRNEQAVISPSWSIHSGVGTKAYTFIWGMVGENQVFDDMDHVAVQDLR</sequence>
<organism>
    <name type="scientific">Salmonella dublin (strain CT_02021853)</name>
    <dbReference type="NCBI Taxonomy" id="439851"/>
    <lineage>
        <taxon>Bacteria</taxon>
        <taxon>Pseudomonadati</taxon>
        <taxon>Pseudomonadota</taxon>
        <taxon>Gammaproteobacteria</taxon>
        <taxon>Enterobacterales</taxon>
        <taxon>Enterobacteriaceae</taxon>
        <taxon>Salmonella</taxon>
    </lineage>
</organism>
<accession>B5FUC8</accession>
<protein>
    <recommendedName>
        <fullName evidence="1">4-deoxy-L-threo-5-hexosulose-uronate ketol-isomerase</fullName>
        <ecNumber evidence="1">5.3.1.17</ecNumber>
    </recommendedName>
    <alternativeName>
        <fullName evidence="1">5-keto-4-deoxyuronate isomerase</fullName>
    </alternativeName>
    <alternativeName>
        <fullName evidence="1">DKI isomerase</fullName>
    </alternativeName>
</protein>
<keyword id="KW-0413">Isomerase</keyword>
<keyword id="KW-0479">Metal-binding</keyword>
<keyword id="KW-0862">Zinc</keyword>
<feature type="chain" id="PRO_1000131889" description="4-deoxy-L-threo-5-hexosulose-uronate ketol-isomerase">
    <location>
        <begin position="1"/>
        <end position="278"/>
    </location>
</feature>
<feature type="binding site" evidence="1">
    <location>
        <position position="196"/>
    </location>
    <ligand>
        <name>Zn(2+)</name>
        <dbReference type="ChEBI" id="CHEBI:29105"/>
    </ligand>
</feature>
<feature type="binding site" evidence="1">
    <location>
        <position position="198"/>
    </location>
    <ligand>
        <name>Zn(2+)</name>
        <dbReference type="ChEBI" id="CHEBI:29105"/>
    </ligand>
</feature>
<feature type="binding site" evidence="1">
    <location>
        <position position="203"/>
    </location>
    <ligand>
        <name>Zn(2+)</name>
        <dbReference type="ChEBI" id="CHEBI:29105"/>
    </ligand>
</feature>
<feature type="binding site" evidence="1">
    <location>
        <position position="245"/>
    </location>
    <ligand>
        <name>Zn(2+)</name>
        <dbReference type="ChEBI" id="CHEBI:29105"/>
    </ligand>
</feature>
<reference key="1">
    <citation type="journal article" date="2011" name="J. Bacteriol.">
        <title>Comparative genomics of 28 Salmonella enterica isolates: evidence for CRISPR-mediated adaptive sublineage evolution.</title>
        <authorList>
            <person name="Fricke W.F."/>
            <person name="Mammel M.K."/>
            <person name="McDermott P.F."/>
            <person name="Tartera C."/>
            <person name="White D.G."/>
            <person name="Leclerc J.E."/>
            <person name="Ravel J."/>
            <person name="Cebula T.A."/>
        </authorList>
    </citation>
    <scope>NUCLEOTIDE SEQUENCE [LARGE SCALE GENOMIC DNA]</scope>
    <source>
        <strain>CT_02021853</strain>
    </source>
</reference>
<name>KDUI_SALDC</name>
<evidence type="ECO:0000255" key="1">
    <source>
        <dbReference type="HAMAP-Rule" id="MF_00687"/>
    </source>
</evidence>
<dbReference type="EC" id="5.3.1.17" evidence="1"/>
<dbReference type="EMBL" id="CP001144">
    <property type="protein sequence ID" value="ACH77122.1"/>
    <property type="molecule type" value="Genomic_DNA"/>
</dbReference>
<dbReference type="RefSeq" id="WP_000383274.1">
    <property type="nucleotide sequence ID" value="NC_011205.1"/>
</dbReference>
<dbReference type="SMR" id="B5FUC8"/>
<dbReference type="KEGG" id="sed:SeD_A3350"/>
<dbReference type="HOGENOM" id="CLU_062609_0_0_6"/>
<dbReference type="UniPathway" id="UPA00545">
    <property type="reaction ID" value="UER00826"/>
</dbReference>
<dbReference type="Proteomes" id="UP000008322">
    <property type="component" value="Chromosome"/>
</dbReference>
<dbReference type="GO" id="GO:0008697">
    <property type="term" value="F:4-deoxy-L-threo-5-hexosulose-uronate ketol-isomerase activity"/>
    <property type="evidence" value="ECO:0007669"/>
    <property type="project" value="UniProtKB-UniRule"/>
</dbReference>
<dbReference type="GO" id="GO:0008270">
    <property type="term" value="F:zinc ion binding"/>
    <property type="evidence" value="ECO:0007669"/>
    <property type="project" value="UniProtKB-UniRule"/>
</dbReference>
<dbReference type="GO" id="GO:0019698">
    <property type="term" value="P:D-galacturonate catabolic process"/>
    <property type="evidence" value="ECO:0007669"/>
    <property type="project" value="TreeGrafter"/>
</dbReference>
<dbReference type="GO" id="GO:0042840">
    <property type="term" value="P:D-glucuronate catabolic process"/>
    <property type="evidence" value="ECO:0007669"/>
    <property type="project" value="TreeGrafter"/>
</dbReference>
<dbReference type="GO" id="GO:0045490">
    <property type="term" value="P:pectin catabolic process"/>
    <property type="evidence" value="ECO:0007669"/>
    <property type="project" value="UniProtKB-UniRule"/>
</dbReference>
<dbReference type="CDD" id="cd20491">
    <property type="entry name" value="cupin_KduI_C"/>
    <property type="match status" value="1"/>
</dbReference>
<dbReference type="CDD" id="cd20294">
    <property type="entry name" value="cupin_KduI_N"/>
    <property type="match status" value="1"/>
</dbReference>
<dbReference type="FunFam" id="2.60.120.10:FF:000018">
    <property type="entry name" value="4-deoxy-L-threo-5-hexosulose-uronate ketol-isomerase"/>
    <property type="match status" value="1"/>
</dbReference>
<dbReference type="FunFam" id="2.60.120.520:FF:000001">
    <property type="entry name" value="4-deoxy-L-threo-5-hexosulose-uronate ketol-isomerase"/>
    <property type="match status" value="1"/>
</dbReference>
<dbReference type="Gene3D" id="2.60.120.10">
    <property type="entry name" value="Jelly Rolls"/>
    <property type="match status" value="1"/>
</dbReference>
<dbReference type="Gene3D" id="2.60.120.520">
    <property type="entry name" value="pectin degrading enzyme 5-keto 4- deoxyuronate isomerase, domain 1"/>
    <property type="match status" value="1"/>
</dbReference>
<dbReference type="HAMAP" id="MF_00687">
    <property type="entry name" value="KduI"/>
    <property type="match status" value="1"/>
</dbReference>
<dbReference type="InterPro" id="IPR007045">
    <property type="entry name" value="KduI"/>
</dbReference>
<dbReference type="InterPro" id="IPR021120">
    <property type="entry name" value="KduI/IolB_isomerase"/>
</dbReference>
<dbReference type="InterPro" id="IPR027449">
    <property type="entry name" value="KduI_N"/>
</dbReference>
<dbReference type="InterPro" id="IPR014710">
    <property type="entry name" value="RmlC-like_jellyroll"/>
</dbReference>
<dbReference type="InterPro" id="IPR011051">
    <property type="entry name" value="RmlC_Cupin_sf"/>
</dbReference>
<dbReference type="NCBIfam" id="NF002091">
    <property type="entry name" value="PRK00924.1"/>
    <property type="match status" value="1"/>
</dbReference>
<dbReference type="PANTHER" id="PTHR38461">
    <property type="entry name" value="4-DEOXY-L-THREO-5-HEXOSULOSE-URONATE KETOL-ISOMERASE"/>
    <property type="match status" value="1"/>
</dbReference>
<dbReference type="PANTHER" id="PTHR38461:SF1">
    <property type="entry name" value="4-DEOXY-L-THREO-5-HEXOSULOSE-URONATE KETOL-ISOMERASE"/>
    <property type="match status" value="1"/>
</dbReference>
<dbReference type="Pfam" id="PF04962">
    <property type="entry name" value="KduI"/>
    <property type="match status" value="1"/>
</dbReference>
<dbReference type="PIRSF" id="PIRSF006625">
    <property type="entry name" value="KduI"/>
    <property type="match status" value="1"/>
</dbReference>
<dbReference type="SUPFAM" id="SSF51182">
    <property type="entry name" value="RmlC-like cupins"/>
    <property type="match status" value="1"/>
</dbReference>
<gene>
    <name evidence="1" type="primary">kduI</name>
    <name type="ordered locus">SeD_A3350</name>
</gene>
<comment type="function">
    <text evidence="1">Catalyzes the isomerization of 5-dehydro-4-deoxy-D-glucuronate to 3-deoxy-D-glycero-2,5-hexodiulosonate.</text>
</comment>
<comment type="catalytic activity">
    <reaction evidence="1">
        <text>5-dehydro-4-deoxy-D-glucuronate = 3-deoxy-D-glycero-2,5-hexodiulosonate</text>
        <dbReference type="Rhea" id="RHEA:23896"/>
        <dbReference type="ChEBI" id="CHEBI:17117"/>
        <dbReference type="ChEBI" id="CHEBI:29071"/>
        <dbReference type="EC" id="5.3.1.17"/>
    </reaction>
</comment>
<comment type="cofactor">
    <cofactor evidence="1">
        <name>Zn(2+)</name>
        <dbReference type="ChEBI" id="CHEBI:29105"/>
    </cofactor>
    <text evidence="1">Binds 1 zinc ion per subunit.</text>
</comment>
<comment type="pathway">
    <text evidence="1">Glycan metabolism; pectin degradation; 2-dehydro-3-deoxy-D-gluconate from pectin: step 4/5.</text>
</comment>
<comment type="similarity">
    <text evidence="1">Belongs to the KduI family.</text>
</comment>
<proteinExistence type="inferred from homology"/>